<comment type="function">
    <text>Binds estrogens, fatty acids and metals.</text>
</comment>
<comment type="subcellular location">
    <subcellularLocation>
        <location>Secreted</location>
    </subcellularLocation>
</comment>
<comment type="tissue specificity">
    <text>Plasma.</text>
</comment>
<comment type="PTM">
    <text>Glycosylated; contains two glycans.</text>
</comment>
<comment type="PTM">
    <text evidence="1">Sulfated.</text>
</comment>
<comment type="similarity">
    <text evidence="4">Belongs to the ALB/AFP/VDB family.</text>
</comment>
<gene>
    <name type="primary">Afp</name>
</gene>
<dbReference type="EMBL" id="V00743">
    <property type="protein sequence ID" value="CAA24118.1"/>
    <property type="molecule type" value="mRNA"/>
</dbReference>
<dbReference type="EMBL" id="M16394">
    <property type="protein sequence ID" value="AAA37189.1"/>
    <property type="molecule type" value="Genomic_DNA"/>
</dbReference>
<dbReference type="EMBL" id="M16381">
    <property type="protein sequence ID" value="AAA37189.1"/>
    <property type="status" value="JOINED"/>
    <property type="molecule type" value="Genomic_DNA"/>
</dbReference>
<dbReference type="EMBL" id="M16382">
    <property type="protein sequence ID" value="AAA37189.1"/>
    <property type="status" value="JOINED"/>
    <property type="molecule type" value="Genomic_DNA"/>
</dbReference>
<dbReference type="EMBL" id="M16383">
    <property type="protein sequence ID" value="AAA37189.1"/>
    <property type="status" value="JOINED"/>
    <property type="molecule type" value="Genomic_DNA"/>
</dbReference>
<dbReference type="EMBL" id="M16384">
    <property type="protein sequence ID" value="AAA37189.1"/>
    <property type="status" value="JOINED"/>
    <property type="molecule type" value="Genomic_DNA"/>
</dbReference>
<dbReference type="EMBL" id="M16385">
    <property type="protein sequence ID" value="AAA37189.1"/>
    <property type="status" value="JOINED"/>
    <property type="molecule type" value="Genomic_DNA"/>
</dbReference>
<dbReference type="EMBL" id="M16386">
    <property type="protein sequence ID" value="AAA37189.1"/>
    <property type="status" value="JOINED"/>
    <property type="molecule type" value="Genomic_DNA"/>
</dbReference>
<dbReference type="EMBL" id="M16387">
    <property type="protein sequence ID" value="AAA37189.1"/>
    <property type="status" value="JOINED"/>
    <property type="molecule type" value="Genomic_DNA"/>
</dbReference>
<dbReference type="EMBL" id="M16388">
    <property type="protein sequence ID" value="AAA37189.1"/>
    <property type="status" value="JOINED"/>
    <property type="molecule type" value="Genomic_DNA"/>
</dbReference>
<dbReference type="EMBL" id="M16389">
    <property type="protein sequence ID" value="AAA37189.1"/>
    <property type="status" value="JOINED"/>
    <property type="molecule type" value="Genomic_DNA"/>
</dbReference>
<dbReference type="EMBL" id="M16390">
    <property type="protein sequence ID" value="AAA37189.1"/>
    <property type="status" value="JOINED"/>
    <property type="molecule type" value="Genomic_DNA"/>
</dbReference>
<dbReference type="EMBL" id="M16391">
    <property type="protein sequence ID" value="AAA37189.1"/>
    <property type="status" value="JOINED"/>
    <property type="molecule type" value="Genomic_DNA"/>
</dbReference>
<dbReference type="EMBL" id="M16392">
    <property type="protein sequence ID" value="AAA37189.1"/>
    <property type="status" value="JOINED"/>
    <property type="molecule type" value="Genomic_DNA"/>
</dbReference>
<dbReference type="EMBL" id="M16393">
    <property type="protein sequence ID" value="AAA37189.1"/>
    <property type="status" value="JOINED"/>
    <property type="molecule type" value="Genomic_DNA"/>
</dbReference>
<dbReference type="EMBL" id="AK010934">
    <property type="protein sequence ID" value="BAB27278.1"/>
    <property type="molecule type" value="mRNA"/>
</dbReference>
<dbReference type="EMBL" id="AK145975">
    <property type="protein sequence ID" value="BAE26798.1"/>
    <property type="molecule type" value="mRNA"/>
</dbReference>
<dbReference type="EMBL" id="AK146513">
    <property type="protein sequence ID" value="BAE27225.1"/>
    <property type="molecule type" value="mRNA"/>
</dbReference>
<dbReference type="EMBL" id="AK146524">
    <property type="protein sequence ID" value="BAE27233.1"/>
    <property type="molecule type" value="mRNA"/>
</dbReference>
<dbReference type="EMBL" id="AK167549">
    <property type="protein sequence ID" value="BAE39615.1"/>
    <property type="molecule type" value="mRNA"/>
</dbReference>
<dbReference type="EMBL" id="AK168574">
    <property type="protein sequence ID" value="BAE40444.1"/>
    <property type="molecule type" value="mRNA"/>
</dbReference>
<dbReference type="EMBL" id="AK168576">
    <property type="protein sequence ID" value="BAE40446.1"/>
    <property type="molecule type" value="mRNA"/>
</dbReference>
<dbReference type="EMBL" id="AK168751">
    <property type="protein sequence ID" value="BAE40591.1"/>
    <property type="molecule type" value="mRNA"/>
</dbReference>
<dbReference type="EMBL" id="AK168883">
    <property type="protein sequence ID" value="BAE40701.1"/>
    <property type="molecule type" value="mRNA"/>
</dbReference>
<dbReference type="EMBL" id="AK169046">
    <property type="protein sequence ID" value="BAE40834.1"/>
    <property type="molecule type" value="mRNA"/>
</dbReference>
<dbReference type="EMBL" id="AK169054">
    <property type="protein sequence ID" value="BAE40842.1"/>
    <property type="molecule type" value="mRNA"/>
</dbReference>
<dbReference type="EMBL" id="AK169147">
    <property type="protein sequence ID" value="BAE40926.1"/>
    <property type="molecule type" value="mRNA"/>
</dbReference>
<dbReference type="EMBL" id="BC066206">
    <property type="protein sequence ID" value="AAH66206.1"/>
    <property type="molecule type" value="mRNA"/>
</dbReference>
<dbReference type="CCDS" id="CCDS19413.1"/>
<dbReference type="PIR" id="A93254">
    <property type="entry name" value="FPMS"/>
</dbReference>
<dbReference type="RefSeq" id="NP_031449.3">
    <property type="nucleotide sequence ID" value="NM_007423.4"/>
</dbReference>
<dbReference type="SMR" id="P02772"/>
<dbReference type="FunCoup" id="P02772">
    <property type="interactions" value="286"/>
</dbReference>
<dbReference type="STRING" id="10090.ENSMUSP00000041006"/>
<dbReference type="GlyCosmos" id="P02772">
    <property type="glycosylation" value="2 sites, No reported glycans"/>
</dbReference>
<dbReference type="GlyGen" id="P02772">
    <property type="glycosylation" value="2 sites"/>
</dbReference>
<dbReference type="iPTMnet" id="P02772"/>
<dbReference type="PhosphoSitePlus" id="P02772"/>
<dbReference type="REPRODUCTION-2DPAGE" id="IPI00113163"/>
<dbReference type="PaxDb" id="10090-ENSMUSP00000041006"/>
<dbReference type="PeptideAtlas" id="P02772"/>
<dbReference type="ProteomicsDB" id="272992"/>
<dbReference type="Antibodypedia" id="1359">
    <property type="antibodies" value="3616 antibodies from 59 providers"/>
</dbReference>
<dbReference type="DNASU" id="11576"/>
<dbReference type="Ensembl" id="ENSMUST00000042755.7">
    <property type="protein sequence ID" value="ENSMUSP00000041006.4"/>
    <property type="gene ID" value="ENSMUSG00000054932.7"/>
</dbReference>
<dbReference type="GeneID" id="11576"/>
<dbReference type="KEGG" id="mmu:11576"/>
<dbReference type="UCSC" id="uc008yba.2">
    <property type="organism name" value="mouse"/>
</dbReference>
<dbReference type="AGR" id="MGI:87951"/>
<dbReference type="CTD" id="174"/>
<dbReference type="MGI" id="MGI:87951">
    <property type="gene designation" value="Afp"/>
</dbReference>
<dbReference type="VEuPathDB" id="HostDB:ENSMUSG00000054932"/>
<dbReference type="eggNOG" id="ENOG502R7EA">
    <property type="taxonomic scope" value="Eukaryota"/>
</dbReference>
<dbReference type="GeneTree" id="ENSGT00390000000113"/>
<dbReference type="HOGENOM" id="CLU_030161_1_0_1"/>
<dbReference type="InParanoid" id="P02772"/>
<dbReference type="OMA" id="HEECCRG"/>
<dbReference type="OrthoDB" id="9875082at2759"/>
<dbReference type="PhylomeDB" id="P02772"/>
<dbReference type="TreeFam" id="TF335561"/>
<dbReference type="Reactome" id="R-MMU-381426">
    <property type="pathway name" value="Regulation of Insulin-like Growth Factor (IGF) transport and uptake by Insulin-like Growth Factor Binding Proteins (IGFBPs)"/>
</dbReference>
<dbReference type="Reactome" id="R-MMU-8957275">
    <property type="pathway name" value="Post-translational protein phosphorylation"/>
</dbReference>
<dbReference type="SABIO-RK" id="P02772"/>
<dbReference type="BioGRID-ORCS" id="11576">
    <property type="hits" value="1 hit in 79 CRISPR screens"/>
</dbReference>
<dbReference type="ChiTaRS" id="Afp">
    <property type="organism name" value="mouse"/>
</dbReference>
<dbReference type="PRO" id="PR:P02772"/>
<dbReference type="Proteomes" id="UP000000589">
    <property type="component" value="Chromosome 5"/>
</dbReference>
<dbReference type="RNAct" id="P02772">
    <property type="molecule type" value="protein"/>
</dbReference>
<dbReference type="Bgee" id="ENSMUSG00000054932">
    <property type="expression patterns" value="Expressed in late embryo and 131 other cell types or tissues"/>
</dbReference>
<dbReference type="ExpressionAtlas" id="P02772">
    <property type="expression patterns" value="baseline and differential"/>
</dbReference>
<dbReference type="GO" id="GO:0005737">
    <property type="term" value="C:cytoplasm"/>
    <property type="evidence" value="ECO:0000314"/>
    <property type="project" value="MGI"/>
</dbReference>
<dbReference type="GO" id="GO:0005615">
    <property type="term" value="C:extracellular space"/>
    <property type="evidence" value="ECO:0000314"/>
    <property type="project" value="MGI"/>
</dbReference>
<dbReference type="GO" id="GO:0046872">
    <property type="term" value="F:metal ion binding"/>
    <property type="evidence" value="ECO:0007669"/>
    <property type="project" value="UniProtKB-KW"/>
</dbReference>
<dbReference type="GO" id="GO:0006915">
    <property type="term" value="P:apoptotic process"/>
    <property type="evidence" value="ECO:0000315"/>
    <property type="project" value="MGI"/>
</dbReference>
<dbReference type="GO" id="GO:0048872">
    <property type="term" value="P:homeostasis of number of cells"/>
    <property type="evidence" value="ECO:0000315"/>
    <property type="project" value="MGI"/>
</dbReference>
<dbReference type="GO" id="GO:0006955">
    <property type="term" value="P:immune response"/>
    <property type="evidence" value="ECO:0000315"/>
    <property type="project" value="MGI"/>
</dbReference>
<dbReference type="GO" id="GO:0001542">
    <property type="term" value="P:ovulation from ovarian follicle"/>
    <property type="evidence" value="ECO:0000315"/>
    <property type="project" value="MGI"/>
</dbReference>
<dbReference type="GO" id="GO:0042448">
    <property type="term" value="P:progesterone metabolic process"/>
    <property type="evidence" value="ECO:0000315"/>
    <property type="project" value="MGI"/>
</dbReference>
<dbReference type="GO" id="GO:0019953">
    <property type="term" value="P:sexual reproduction"/>
    <property type="evidence" value="ECO:0000315"/>
    <property type="project" value="MGI"/>
</dbReference>
<dbReference type="CDD" id="cd00015">
    <property type="entry name" value="ALBUMIN"/>
    <property type="match status" value="3"/>
</dbReference>
<dbReference type="FunFam" id="1.10.246.10:FF:000001">
    <property type="entry name" value="Serum albumin"/>
    <property type="match status" value="1"/>
</dbReference>
<dbReference type="FunFam" id="1.10.246.10:FF:000002">
    <property type="entry name" value="Serum albumin"/>
    <property type="match status" value="2"/>
</dbReference>
<dbReference type="FunFam" id="1.10.246.10:FF:000004">
    <property type="entry name" value="Serum albumin"/>
    <property type="match status" value="1"/>
</dbReference>
<dbReference type="Gene3D" id="1.10.246.10">
    <property type="match status" value="6"/>
</dbReference>
<dbReference type="InterPro" id="IPR000264">
    <property type="entry name" value="ALB/AFP/VDB"/>
</dbReference>
<dbReference type="InterPro" id="IPR020858">
    <property type="entry name" value="Serum_albumin-like"/>
</dbReference>
<dbReference type="InterPro" id="IPR021177">
    <property type="entry name" value="Serum_albumin/AFP/Afamin"/>
</dbReference>
<dbReference type="InterPro" id="IPR020857">
    <property type="entry name" value="Serum_albumin_CS"/>
</dbReference>
<dbReference type="InterPro" id="IPR014760">
    <property type="entry name" value="Serum_albumin_N"/>
</dbReference>
<dbReference type="PANTHER" id="PTHR11385:SF7">
    <property type="entry name" value="ALPHA-FETOPROTEIN"/>
    <property type="match status" value="1"/>
</dbReference>
<dbReference type="PANTHER" id="PTHR11385">
    <property type="entry name" value="SERUM ALBUMIN-RELATED"/>
    <property type="match status" value="1"/>
</dbReference>
<dbReference type="Pfam" id="PF00273">
    <property type="entry name" value="Serum_albumin"/>
    <property type="match status" value="3"/>
</dbReference>
<dbReference type="PIRSF" id="PIRSF002520">
    <property type="entry name" value="Serum_albumin_subgroup"/>
    <property type="match status" value="1"/>
</dbReference>
<dbReference type="PRINTS" id="PR00803">
    <property type="entry name" value="AFETOPROTEIN"/>
</dbReference>
<dbReference type="PRINTS" id="PR00802">
    <property type="entry name" value="SERUMALBUMIN"/>
</dbReference>
<dbReference type="SMART" id="SM00103">
    <property type="entry name" value="ALBUMIN"/>
    <property type="match status" value="3"/>
</dbReference>
<dbReference type="SUPFAM" id="SSF48552">
    <property type="entry name" value="Serum albumin-like"/>
    <property type="match status" value="3"/>
</dbReference>
<dbReference type="PROSITE" id="PS00212">
    <property type="entry name" value="ALBUMIN_1"/>
    <property type="match status" value="2"/>
</dbReference>
<dbReference type="PROSITE" id="PS51438">
    <property type="entry name" value="ALBUMIN_2"/>
    <property type="match status" value="3"/>
</dbReference>
<protein>
    <recommendedName>
        <fullName>Alpha-fetoprotein</fullName>
    </recommendedName>
    <alternativeName>
        <fullName>Alpha-1-fetoprotein</fullName>
    </alternativeName>
    <alternativeName>
        <fullName>Alpha-fetoglobulin</fullName>
    </alternativeName>
</protein>
<proteinExistence type="evidence at transcript level"/>
<organism>
    <name type="scientific">Mus musculus</name>
    <name type="common">Mouse</name>
    <dbReference type="NCBI Taxonomy" id="10090"/>
    <lineage>
        <taxon>Eukaryota</taxon>
        <taxon>Metazoa</taxon>
        <taxon>Chordata</taxon>
        <taxon>Craniata</taxon>
        <taxon>Vertebrata</taxon>
        <taxon>Euteleostomi</taxon>
        <taxon>Mammalia</taxon>
        <taxon>Eutheria</taxon>
        <taxon>Euarchontoglires</taxon>
        <taxon>Glires</taxon>
        <taxon>Rodentia</taxon>
        <taxon>Myomorpha</taxon>
        <taxon>Muroidea</taxon>
        <taxon>Muridae</taxon>
        <taxon>Murinae</taxon>
        <taxon>Mus</taxon>
        <taxon>Mus</taxon>
    </lineage>
</organism>
<keyword id="KW-0186">Copper</keyword>
<keyword id="KW-1015">Disulfide bond</keyword>
<keyword id="KW-0325">Glycoprotein</keyword>
<keyword id="KW-0479">Metal-binding</keyword>
<keyword id="KW-0533">Nickel</keyword>
<keyword id="KW-0597">Phosphoprotein</keyword>
<keyword id="KW-1185">Reference proteome</keyword>
<keyword id="KW-0677">Repeat</keyword>
<keyword id="KW-0964">Secreted</keyword>
<keyword id="KW-0732">Signal</keyword>
<keyword id="KW-0765">Sulfation</keyword>
<name>FETA_MOUSE</name>
<accession>P02772</accession>
<accession>Q3UJD0</accession>
<reference key="1">
    <citation type="journal article" date="1981" name="Nature">
        <title>Homology between the primary structure of alpha-fetoprotein, deduced from a complete cDNA sequence, and serum albumin.</title>
        <authorList>
            <person name="Law S.W."/>
            <person name="Dugaiczyk A."/>
        </authorList>
    </citation>
    <scope>NUCLEOTIDE SEQUENCE [MRNA]</scope>
</reference>
<reference key="2">
    <citation type="journal article" date="1985" name="Mol. Biol. Evol.">
        <title>The rate of molecular evolution of alpha-fetoprotein approaches that of pseudogenes.</title>
        <authorList>
            <person name="Minghetti P.P."/>
            <person name="Law S.W."/>
            <person name="Dugaiczyk A."/>
        </authorList>
    </citation>
    <scope>SEQUENCE REVISION TO 598</scope>
</reference>
<reference key="3">
    <citation type="journal article" date="1981" name="Nature">
        <title>Intragenic amplification and divergence in the mouse alpha-fetoprotein gene.</title>
        <authorList>
            <person name="Eiferman F.A."/>
            <person name="Young P.R."/>
            <person name="Scott R.W."/>
            <person name="Tilghman S.M."/>
        </authorList>
    </citation>
    <scope>NUCLEOTIDE SEQUENCE [GENOMIC DNA]</scope>
</reference>
<reference key="4">
    <citation type="journal article" date="2005" name="Science">
        <title>The transcriptional landscape of the mammalian genome.</title>
        <authorList>
            <person name="Carninci P."/>
            <person name="Kasukawa T."/>
            <person name="Katayama S."/>
            <person name="Gough J."/>
            <person name="Frith M.C."/>
            <person name="Maeda N."/>
            <person name="Oyama R."/>
            <person name="Ravasi T."/>
            <person name="Lenhard B."/>
            <person name="Wells C."/>
            <person name="Kodzius R."/>
            <person name="Shimokawa K."/>
            <person name="Bajic V.B."/>
            <person name="Brenner S.E."/>
            <person name="Batalov S."/>
            <person name="Forrest A.R."/>
            <person name="Zavolan M."/>
            <person name="Davis M.J."/>
            <person name="Wilming L.G."/>
            <person name="Aidinis V."/>
            <person name="Allen J.E."/>
            <person name="Ambesi-Impiombato A."/>
            <person name="Apweiler R."/>
            <person name="Aturaliya R.N."/>
            <person name="Bailey T.L."/>
            <person name="Bansal M."/>
            <person name="Baxter L."/>
            <person name="Beisel K.W."/>
            <person name="Bersano T."/>
            <person name="Bono H."/>
            <person name="Chalk A.M."/>
            <person name="Chiu K.P."/>
            <person name="Choudhary V."/>
            <person name="Christoffels A."/>
            <person name="Clutterbuck D.R."/>
            <person name="Crowe M.L."/>
            <person name="Dalla E."/>
            <person name="Dalrymple B.P."/>
            <person name="de Bono B."/>
            <person name="Della Gatta G."/>
            <person name="di Bernardo D."/>
            <person name="Down T."/>
            <person name="Engstrom P."/>
            <person name="Fagiolini M."/>
            <person name="Faulkner G."/>
            <person name="Fletcher C.F."/>
            <person name="Fukushima T."/>
            <person name="Furuno M."/>
            <person name="Futaki S."/>
            <person name="Gariboldi M."/>
            <person name="Georgii-Hemming P."/>
            <person name="Gingeras T.R."/>
            <person name="Gojobori T."/>
            <person name="Green R.E."/>
            <person name="Gustincich S."/>
            <person name="Harbers M."/>
            <person name="Hayashi Y."/>
            <person name="Hensch T.K."/>
            <person name="Hirokawa N."/>
            <person name="Hill D."/>
            <person name="Huminiecki L."/>
            <person name="Iacono M."/>
            <person name="Ikeo K."/>
            <person name="Iwama A."/>
            <person name="Ishikawa T."/>
            <person name="Jakt M."/>
            <person name="Kanapin A."/>
            <person name="Katoh M."/>
            <person name="Kawasawa Y."/>
            <person name="Kelso J."/>
            <person name="Kitamura H."/>
            <person name="Kitano H."/>
            <person name="Kollias G."/>
            <person name="Krishnan S.P."/>
            <person name="Kruger A."/>
            <person name="Kummerfeld S.K."/>
            <person name="Kurochkin I.V."/>
            <person name="Lareau L.F."/>
            <person name="Lazarevic D."/>
            <person name="Lipovich L."/>
            <person name="Liu J."/>
            <person name="Liuni S."/>
            <person name="McWilliam S."/>
            <person name="Madan Babu M."/>
            <person name="Madera M."/>
            <person name="Marchionni L."/>
            <person name="Matsuda H."/>
            <person name="Matsuzawa S."/>
            <person name="Miki H."/>
            <person name="Mignone F."/>
            <person name="Miyake S."/>
            <person name="Morris K."/>
            <person name="Mottagui-Tabar S."/>
            <person name="Mulder N."/>
            <person name="Nakano N."/>
            <person name="Nakauchi H."/>
            <person name="Ng P."/>
            <person name="Nilsson R."/>
            <person name="Nishiguchi S."/>
            <person name="Nishikawa S."/>
            <person name="Nori F."/>
            <person name="Ohara O."/>
            <person name="Okazaki Y."/>
            <person name="Orlando V."/>
            <person name="Pang K.C."/>
            <person name="Pavan W.J."/>
            <person name="Pavesi G."/>
            <person name="Pesole G."/>
            <person name="Petrovsky N."/>
            <person name="Piazza S."/>
            <person name="Reed J."/>
            <person name="Reid J.F."/>
            <person name="Ring B.Z."/>
            <person name="Ringwald M."/>
            <person name="Rost B."/>
            <person name="Ruan Y."/>
            <person name="Salzberg S.L."/>
            <person name="Sandelin A."/>
            <person name="Schneider C."/>
            <person name="Schoenbach C."/>
            <person name="Sekiguchi K."/>
            <person name="Semple C.A."/>
            <person name="Seno S."/>
            <person name="Sessa L."/>
            <person name="Sheng Y."/>
            <person name="Shibata Y."/>
            <person name="Shimada H."/>
            <person name="Shimada K."/>
            <person name="Silva D."/>
            <person name="Sinclair B."/>
            <person name="Sperling S."/>
            <person name="Stupka E."/>
            <person name="Sugiura K."/>
            <person name="Sultana R."/>
            <person name="Takenaka Y."/>
            <person name="Taki K."/>
            <person name="Tammoja K."/>
            <person name="Tan S.L."/>
            <person name="Tang S."/>
            <person name="Taylor M.S."/>
            <person name="Tegner J."/>
            <person name="Teichmann S.A."/>
            <person name="Ueda H.R."/>
            <person name="van Nimwegen E."/>
            <person name="Verardo R."/>
            <person name="Wei C.L."/>
            <person name="Yagi K."/>
            <person name="Yamanishi H."/>
            <person name="Zabarovsky E."/>
            <person name="Zhu S."/>
            <person name="Zimmer A."/>
            <person name="Hide W."/>
            <person name="Bult C."/>
            <person name="Grimmond S.M."/>
            <person name="Teasdale R.D."/>
            <person name="Liu E.T."/>
            <person name="Brusic V."/>
            <person name="Quackenbush J."/>
            <person name="Wahlestedt C."/>
            <person name="Mattick J.S."/>
            <person name="Hume D.A."/>
            <person name="Kai C."/>
            <person name="Sasaki D."/>
            <person name="Tomaru Y."/>
            <person name="Fukuda S."/>
            <person name="Kanamori-Katayama M."/>
            <person name="Suzuki M."/>
            <person name="Aoki J."/>
            <person name="Arakawa T."/>
            <person name="Iida J."/>
            <person name="Imamura K."/>
            <person name="Itoh M."/>
            <person name="Kato T."/>
            <person name="Kawaji H."/>
            <person name="Kawagashira N."/>
            <person name="Kawashima T."/>
            <person name="Kojima M."/>
            <person name="Kondo S."/>
            <person name="Konno H."/>
            <person name="Nakano K."/>
            <person name="Ninomiya N."/>
            <person name="Nishio T."/>
            <person name="Okada M."/>
            <person name="Plessy C."/>
            <person name="Shibata K."/>
            <person name="Shiraki T."/>
            <person name="Suzuki S."/>
            <person name="Tagami M."/>
            <person name="Waki K."/>
            <person name="Watahiki A."/>
            <person name="Okamura-Oho Y."/>
            <person name="Suzuki H."/>
            <person name="Kawai J."/>
            <person name="Hayashizaki Y."/>
        </authorList>
    </citation>
    <scope>NUCLEOTIDE SEQUENCE [LARGE SCALE MRNA]</scope>
    <source>
        <strain>C57BL/6J</strain>
        <tissue>Amnion</tissue>
        <tissue>Liver</tissue>
        <tissue>Placenta</tissue>
    </source>
</reference>
<reference key="5">
    <citation type="journal article" date="2004" name="Genome Res.">
        <title>The status, quality, and expansion of the NIH full-length cDNA project: the Mammalian Gene Collection (MGC).</title>
        <authorList>
            <consortium name="The MGC Project Team"/>
        </authorList>
    </citation>
    <scope>NUCLEOTIDE SEQUENCE [LARGE SCALE MRNA]</scope>
    <source>
        <strain>C57BL/6J</strain>
        <tissue>Kidney</tissue>
    </source>
</reference>
<reference key="6">
    <citation type="journal article" date="1981" name="J. Biol. Chem.">
        <title>The evolution of alpha-fetoprotein and albumin. I. A comparison of the primary amino acid sequences of mammalian alpha-fetoprotein and albumin.</title>
        <authorList>
            <person name="Gorin M.B."/>
            <person name="Cooper D.L."/>
            <person name="Eiferman F.A."/>
            <person name="van de Rijn P."/>
            <person name="Tilghman S.M."/>
        </authorList>
    </citation>
    <scope>NUCLEOTIDE SEQUENCE [GENOMIC DNA] OF 15-605</scope>
</reference>
<evidence type="ECO:0000250" key="1"/>
<evidence type="ECO:0000250" key="2">
    <source>
        <dbReference type="UniProtKB" id="P02771"/>
    </source>
</evidence>
<evidence type="ECO:0000255" key="3"/>
<evidence type="ECO:0000255" key="4">
    <source>
        <dbReference type="PROSITE-ProRule" id="PRU00769"/>
    </source>
</evidence>
<evidence type="ECO:0000305" key="5"/>
<feature type="signal peptide" evidence="1">
    <location>
        <begin position="1"/>
        <end position="18"/>
    </location>
</feature>
<feature type="chain" id="PRO_0000001098" description="Alpha-fetoprotein">
    <location>
        <begin position="19"/>
        <end position="605"/>
    </location>
</feature>
<feature type="domain" description="Albumin 1" evidence="4">
    <location>
        <begin position="19"/>
        <end position="207"/>
    </location>
</feature>
<feature type="domain" description="Albumin 2" evidence="4">
    <location>
        <begin position="208"/>
        <end position="398"/>
    </location>
</feature>
<feature type="domain" description="Albumin 3" evidence="4">
    <location>
        <begin position="399"/>
        <end position="597"/>
    </location>
</feature>
<feature type="modified residue" description="Phosphoserine" evidence="2">
    <location>
        <position position="107"/>
    </location>
</feature>
<feature type="modified residue" description="Phosphoserine" evidence="2">
    <location>
        <position position="111"/>
    </location>
</feature>
<feature type="modified residue" description="Phosphoserine" evidence="2">
    <location>
        <position position="113"/>
    </location>
</feature>
<feature type="modified residue" description="Phosphoserine" evidence="2">
    <location>
        <position position="340"/>
    </location>
</feature>
<feature type="modified residue" description="Phosphoserine" evidence="2">
    <location>
        <position position="440"/>
    </location>
</feature>
<feature type="glycosylation site" description="N-linked (GlcNAc...) asparagine" evidence="3">
    <location>
        <position position="247"/>
    </location>
</feature>
<feature type="glycosylation site" description="N-linked (GlcNAc...) asparagine" evidence="3">
    <location>
        <position position="498"/>
    </location>
</feature>
<feature type="disulfide bond" evidence="4">
    <location>
        <begin position="95"/>
        <end position="110"/>
    </location>
</feature>
<feature type="disulfide bond" evidence="4">
    <location>
        <begin position="109"/>
        <end position="120"/>
    </location>
</feature>
<feature type="disulfide bond" evidence="4">
    <location>
        <begin position="144"/>
        <end position="189"/>
    </location>
</feature>
<feature type="disulfide bond" evidence="4">
    <location>
        <begin position="188"/>
        <end position="197"/>
    </location>
</feature>
<feature type="disulfide bond" evidence="4">
    <location>
        <begin position="220"/>
        <end position="266"/>
    </location>
</feature>
<feature type="disulfide bond" evidence="4">
    <location>
        <begin position="265"/>
        <end position="273"/>
    </location>
</feature>
<feature type="disulfide bond" evidence="4">
    <location>
        <begin position="285"/>
        <end position="299"/>
    </location>
</feature>
<feature type="disulfide bond" evidence="4">
    <location>
        <begin position="298"/>
        <end position="309"/>
    </location>
</feature>
<feature type="disulfide bond" evidence="4">
    <location>
        <begin position="380"/>
        <end position="389"/>
    </location>
</feature>
<feature type="disulfide bond" evidence="4">
    <location>
        <begin position="412"/>
        <end position="458"/>
    </location>
</feature>
<feature type="disulfide bond" evidence="4">
    <location>
        <begin position="457"/>
        <end position="468"/>
    </location>
</feature>
<feature type="disulfide bond" evidence="4">
    <location>
        <begin position="481"/>
        <end position="497"/>
    </location>
</feature>
<feature type="disulfide bond" evidence="4">
    <location>
        <begin position="496"/>
        <end position="507"/>
    </location>
</feature>
<feature type="disulfide bond" evidence="4">
    <location>
        <begin position="534"/>
        <end position="579"/>
    </location>
</feature>
<feature type="disulfide bond" evidence="4">
    <location>
        <begin position="578"/>
        <end position="587"/>
    </location>
</feature>
<feature type="sequence conflict" description="In Ref. 6; no nucleotide entry." evidence="5" ref="6">
    <original>LCQA</original>
    <variation>RAKL</variation>
    <location>
        <begin position="533"/>
        <end position="536"/>
    </location>
</feature>
<sequence>MKWITPASLILLLHFAASKALHENEFGIASTLDSSQCVTEKNVLSIATITFTQFVPEATEEEVNKMTSDVLAAMKKNSGDGCLESQLSVFLDEICHETELSNKYGLSGCCSQSGVERHQCLLARKKTAPASVPPFQFPEPAESCKAHEENRAVFMNRFIYEVSRRNPFMYAPAILSLAAQYDKVVLACCKADNKEECFQTKRASIAKELREGSMLNEHVCSVIRKFGSRNLQATTIIKLSQKLTEANFTEIQKLALDVAHIHEECCQGNSLECLQDGEKVMTYICSQQNILSSKIAECCKLPMIQLGFCIIHAENGVKPEGLSLNPSQFLGDRNFAQFSSEEKIMFMASFLHEYSRTHPNLPVSVILRIAKTYQEILEKCSQSGNLPGCQDNLEEELQKHIEESQALSKQSCALYQTLGDYKLQNLFLIGYTRKAPQLTSAELIDLTGKMVSIASTCCQLSEEKWSGCGEGMADIFIGHLCIRNEASPVNSGISHCCNSSYSNRRLCITSFLRDETYAPPPFSEDKFIFHKDLCQAQGKALQTMKQELLINLVKQKPELTEEQLAAVTADFSGLLEKCCKAQDQEVCFTEEGPKLISKTRDALGV</sequence>